<protein>
    <recommendedName>
        <fullName evidence="1">Holliday junction branch migration complex subunit RuvA</fullName>
    </recommendedName>
</protein>
<feature type="chain" id="PRO_1000002391" description="Holliday junction branch migration complex subunit RuvA">
    <location>
        <begin position="1"/>
        <end position="197"/>
    </location>
</feature>
<feature type="region of interest" description="Domain I" evidence="1">
    <location>
        <begin position="1"/>
        <end position="64"/>
    </location>
</feature>
<feature type="region of interest" description="Domain II" evidence="1">
    <location>
        <begin position="65"/>
        <end position="141"/>
    </location>
</feature>
<feature type="region of interest" description="Flexible linker" evidence="1">
    <location>
        <begin position="141"/>
        <end position="145"/>
    </location>
</feature>
<feature type="region of interest" description="Domain III" evidence="1">
    <location>
        <begin position="146"/>
        <end position="197"/>
    </location>
</feature>
<comment type="function">
    <text evidence="1">The RuvA-RuvB-RuvC complex processes Holliday junction (HJ) DNA during genetic recombination and DNA repair, while the RuvA-RuvB complex plays an important role in the rescue of blocked DNA replication forks via replication fork reversal (RFR). RuvA specifically binds to HJ cruciform DNA, conferring on it an open structure. The RuvB hexamer acts as an ATP-dependent pump, pulling dsDNA into and through the RuvAB complex. HJ branch migration allows RuvC to scan DNA until it finds its consensus sequence, where it cleaves and resolves the cruciform DNA.</text>
</comment>
<comment type="subunit">
    <text evidence="1">Homotetramer. Forms an RuvA(8)-RuvB(12)-Holliday junction (HJ) complex. HJ DNA is sandwiched between 2 RuvA tetramers; dsDNA enters through RuvA and exits via RuvB. An RuvB hexamer assembles on each DNA strand where it exits the tetramer. Each RuvB hexamer is contacted by two RuvA subunits (via domain III) on 2 adjacent RuvB subunits; this complex drives branch migration. In the full resolvosome a probable DNA-RuvA(4)-RuvB(12)-RuvC(2) complex forms which resolves the HJ.</text>
</comment>
<comment type="subcellular location">
    <subcellularLocation>
        <location evidence="1">Cytoplasm</location>
    </subcellularLocation>
</comment>
<comment type="domain">
    <text evidence="1">Has three domains with a flexible linker between the domains II and III and assumes an 'L' shape. Domain III is highly mobile and contacts RuvB.</text>
</comment>
<comment type="similarity">
    <text evidence="1">Belongs to the RuvA family.</text>
</comment>
<dbReference type="EMBL" id="CP000769">
    <property type="protein sequence ID" value="ABS25202.1"/>
    <property type="molecule type" value="Genomic_DNA"/>
</dbReference>
<dbReference type="RefSeq" id="WP_011985308.1">
    <property type="nucleotide sequence ID" value="NC_009675.1"/>
</dbReference>
<dbReference type="SMR" id="A7H906"/>
<dbReference type="STRING" id="404589.Anae109_0993"/>
<dbReference type="KEGG" id="afw:Anae109_0993"/>
<dbReference type="eggNOG" id="COG0632">
    <property type="taxonomic scope" value="Bacteria"/>
</dbReference>
<dbReference type="HOGENOM" id="CLU_087936_0_0_7"/>
<dbReference type="OrthoDB" id="5293449at2"/>
<dbReference type="Proteomes" id="UP000006382">
    <property type="component" value="Chromosome"/>
</dbReference>
<dbReference type="GO" id="GO:0005737">
    <property type="term" value="C:cytoplasm"/>
    <property type="evidence" value="ECO:0007669"/>
    <property type="project" value="UniProtKB-SubCell"/>
</dbReference>
<dbReference type="GO" id="GO:0009379">
    <property type="term" value="C:Holliday junction helicase complex"/>
    <property type="evidence" value="ECO:0007669"/>
    <property type="project" value="InterPro"/>
</dbReference>
<dbReference type="GO" id="GO:0048476">
    <property type="term" value="C:Holliday junction resolvase complex"/>
    <property type="evidence" value="ECO:0007669"/>
    <property type="project" value="UniProtKB-UniRule"/>
</dbReference>
<dbReference type="GO" id="GO:0005524">
    <property type="term" value="F:ATP binding"/>
    <property type="evidence" value="ECO:0007669"/>
    <property type="project" value="InterPro"/>
</dbReference>
<dbReference type="GO" id="GO:0000400">
    <property type="term" value="F:four-way junction DNA binding"/>
    <property type="evidence" value="ECO:0007669"/>
    <property type="project" value="UniProtKB-UniRule"/>
</dbReference>
<dbReference type="GO" id="GO:0009378">
    <property type="term" value="F:four-way junction helicase activity"/>
    <property type="evidence" value="ECO:0007669"/>
    <property type="project" value="InterPro"/>
</dbReference>
<dbReference type="GO" id="GO:0006310">
    <property type="term" value="P:DNA recombination"/>
    <property type="evidence" value="ECO:0007669"/>
    <property type="project" value="UniProtKB-UniRule"/>
</dbReference>
<dbReference type="GO" id="GO:0006281">
    <property type="term" value="P:DNA repair"/>
    <property type="evidence" value="ECO:0007669"/>
    <property type="project" value="UniProtKB-UniRule"/>
</dbReference>
<dbReference type="CDD" id="cd14332">
    <property type="entry name" value="UBA_RuvA_C"/>
    <property type="match status" value="1"/>
</dbReference>
<dbReference type="Gene3D" id="1.10.150.20">
    <property type="entry name" value="5' to 3' exonuclease, C-terminal subdomain"/>
    <property type="match status" value="1"/>
</dbReference>
<dbReference type="Gene3D" id="1.10.8.10">
    <property type="entry name" value="DNA helicase RuvA subunit, C-terminal domain"/>
    <property type="match status" value="1"/>
</dbReference>
<dbReference type="Gene3D" id="2.40.50.140">
    <property type="entry name" value="Nucleic acid-binding proteins"/>
    <property type="match status" value="1"/>
</dbReference>
<dbReference type="HAMAP" id="MF_00031">
    <property type="entry name" value="DNA_HJ_migration_RuvA"/>
    <property type="match status" value="1"/>
</dbReference>
<dbReference type="InterPro" id="IPR013849">
    <property type="entry name" value="DNA_helicase_Holl-junc_RuvA_I"/>
</dbReference>
<dbReference type="InterPro" id="IPR003583">
    <property type="entry name" value="Hlx-hairpin-Hlx_DNA-bd_motif"/>
</dbReference>
<dbReference type="InterPro" id="IPR012340">
    <property type="entry name" value="NA-bd_OB-fold"/>
</dbReference>
<dbReference type="InterPro" id="IPR000085">
    <property type="entry name" value="RuvA"/>
</dbReference>
<dbReference type="InterPro" id="IPR010994">
    <property type="entry name" value="RuvA_2-like"/>
</dbReference>
<dbReference type="InterPro" id="IPR011114">
    <property type="entry name" value="RuvA_C"/>
</dbReference>
<dbReference type="InterPro" id="IPR036267">
    <property type="entry name" value="RuvA_C_sf"/>
</dbReference>
<dbReference type="NCBIfam" id="TIGR00084">
    <property type="entry name" value="ruvA"/>
    <property type="match status" value="1"/>
</dbReference>
<dbReference type="Pfam" id="PF14520">
    <property type="entry name" value="HHH_5"/>
    <property type="match status" value="1"/>
</dbReference>
<dbReference type="Pfam" id="PF07499">
    <property type="entry name" value="RuvA_C"/>
    <property type="match status" value="1"/>
</dbReference>
<dbReference type="Pfam" id="PF01330">
    <property type="entry name" value="RuvA_N"/>
    <property type="match status" value="1"/>
</dbReference>
<dbReference type="SMART" id="SM00278">
    <property type="entry name" value="HhH1"/>
    <property type="match status" value="2"/>
</dbReference>
<dbReference type="SUPFAM" id="SSF46929">
    <property type="entry name" value="DNA helicase RuvA subunit, C-terminal domain"/>
    <property type="match status" value="1"/>
</dbReference>
<dbReference type="SUPFAM" id="SSF50249">
    <property type="entry name" value="Nucleic acid-binding proteins"/>
    <property type="match status" value="1"/>
</dbReference>
<dbReference type="SUPFAM" id="SSF47781">
    <property type="entry name" value="RuvA domain 2-like"/>
    <property type="match status" value="1"/>
</dbReference>
<proteinExistence type="inferred from homology"/>
<organism>
    <name type="scientific">Anaeromyxobacter sp. (strain Fw109-5)</name>
    <dbReference type="NCBI Taxonomy" id="404589"/>
    <lineage>
        <taxon>Bacteria</taxon>
        <taxon>Pseudomonadati</taxon>
        <taxon>Myxococcota</taxon>
        <taxon>Myxococcia</taxon>
        <taxon>Myxococcales</taxon>
        <taxon>Cystobacterineae</taxon>
        <taxon>Anaeromyxobacteraceae</taxon>
        <taxon>Anaeromyxobacter</taxon>
    </lineage>
</organism>
<evidence type="ECO:0000255" key="1">
    <source>
        <dbReference type="HAMAP-Rule" id="MF_00031"/>
    </source>
</evidence>
<reference key="1">
    <citation type="journal article" date="2015" name="Genome Announc.">
        <title>Complete genome sequence of Anaeromyxobacter sp. Fw109-5, an anaerobic, metal-reducing bacterium isolated from a contaminated subsurface environment.</title>
        <authorList>
            <person name="Hwang C."/>
            <person name="Copeland A."/>
            <person name="Lucas S."/>
            <person name="Lapidus A."/>
            <person name="Barry K."/>
            <person name="Glavina Del Rio T."/>
            <person name="Dalin E."/>
            <person name="Tice H."/>
            <person name="Pitluck S."/>
            <person name="Sims D."/>
            <person name="Brettin T."/>
            <person name="Bruce D.C."/>
            <person name="Detter J.C."/>
            <person name="Han C.S."/>
            <person name="Schmutz J."/>
            <person name="Larimer F.W."/>
            <person name="Land M.L."/>
            <person name="Hauser L.J."/>
            <person name="Kyrpides N."/>
            <person name="Lykidis A."/>
            <person name="Richardson P."/>
            <person name="Belieav A."/>
            <person name="Sanford R.A."/>
            <person name="Loeffler F.E."/>
            <person name="Fields M.W."/>
        </authorList>
    </citation>
    <scope>NUCLEOTIDE SEQUENCE [LARGE SCALE GENOMIC DNA]</scope>
    <source>
        <strain>Fw109-5</strain>
    </source>
</reference>
<accession>A7H906</accession>
<name>RUVA_ANADF</name>
<keyword id="KW-0963">Cytoplasm</keyword>
<keyword id="KW-0227">DNA damage</keyword>
<keyword id="KW-0233">DNA recombination</keyword>
<keyword id="KW-0234">DNA repair</keyword>
<keyword id="KW-0238">DNA-binding</keyword>
<keyword id="KW-1185">Reference proteome</keyword>
<gene>
    <name evidence="1" type="primary">ruvA</name>
    <name type="ordered locus">Anae109_0993</name>
</gene>
<sequence length="197" mass="20627">MIARLAGKVAEKGADHVVLDVGGVGYLVHLSAVSLAGLPPQGGDGTLRIFTNVRQDAIELYGFASEDEEAVFRALIDVKGVGPRAAQNILSGIDARELAQAVAGSDVARLTKVPGIGKKTAERLVVELKEKLALLARAAGPARAKPGAGVVEQLRQALVNLGYKPPQADAAADALRDEAEGKKLDELLREALKRLRG</sequence>